<proteinExistence type="evidence at protein level"/>
<protein>
    <recommendedName>
        <fullName evidence="15">Serine carboxypeptidase-like 19</fullName>
    </recommendedName>
    <alternativeName>
        <fullName evidence="13">Protein SINAPOYLGLUCOSE ACCUMULATOR 2</fullName>
    </alternativeName>
    <alternativeName>
        <fullName evidence="14">Sinapoylglucose--choline O-sinapoyltransferase</fullName>
        <shortName evidence="14">SCT</shortName>
        <ecNumber evidence="7">2.3.1.91</ecNumber>
    </alternativeName>
    <component>
        <recommendedName>
            <fullName>Serine carboxypeptidase-like 19 chain A</fullName>
        </recommendedName>
    </component>
    <component>
        <recommendedName>
            <fullName>Serine carboxypeptidase-like 19 chain B</fullName>
        </recommendedName>
    </component>
</protein>
<feature type="signal peptide" evidence="4">
    <location>
        <begin position="1"/>
        <end position="23"/>
    </location>
</feature>
<feature type="chain" id="PRO_0000274633" description="Serine carboxypeptidase-like 19 chain A" evidence="1">
    <location>
        <begin position="24"/>
        <end position="291"/>
    </location>
</feature>
<feature type="propeptide" id="PRO_0000274634" description="Linker peptide" evidence="1">
    <location>
        <begin position="292"/>
        <end position="317"/>
    </location>
</feature>
<feature type="chain" id="PRO_0000274635" description="Serine carboxypeptidase-like 19 chain B" evidence="1">
    <location>
        <begin position="318"/>
        <end position="465"/>
    </location>
</feature>
<feature type="active site" evidence="2">
    <location>
        <position position="178"/>
    </location>
</feature>
<feature type="active site" evidence="2">
    <location>
        <position position="389"/>
    </location>
</feature>
<feature type="active site" evidence="2">
    <location>
        <position position="443"/>
    </location>
</feature>
<feature type="binding site" evidence="2">
    <location>
        <begin position="77"/>
        <end position="79"/>
    </location>
    <ligand>
        <name>substrate</name>
    </ligand>
</feature>
<feature type="binding site" evidence="2">
    <location>
        <begin position="177"/>
        <end position="179"/>
    </location>
    <ligand>
        <name>substrate</name>
    </ligand>
</feature>
<feature type="binding site" evidence="2">
    <location>
        <begin position="439"/>
        <end position="443"/>
    </location>
    <ligand>
        <name>substrate</name>
    </ligand>
</feature>
<feature type="glycosylation site" description="N-linked (GlcNAc...) asparagine" evidence="5">
    <location>
        <position position="103"/>
    </location>
</feature>
<feature type="glycosylation site" description="N-linked (GlcNAc...) asparagine" evidence="5">
    <location>
        <position position="310"/>
    </location>
</feature>
<feature type="glycosylation site" description="N-linked (GlcNAc...) asparagine" evidence="5">
    <location>
        <position position="373"/>
    </location>
</feature>
<feature type="glycosylation site" description="N-linked (GlcNAc...) asparagine" evidence="5">
    <location>
        <position position="405"/>
    </location>
</feature>
<feature type="disulfide bond" description="Interchain (between A and B chains)" evidence="3">
    <location>
        <begin position="82"/>
        <end position="353"/>
    </location>
</feature>
<feature type="disulfide bond" evidence="3">
    <location>
        <begin position="246"/>
        <end position="260"/>
    </location>
</feature>
<feature type="disulfide bond" description="Interchain (between A and B chains)" evidence="3">
    <location>
        <begin position="284"/>
        <end position="320"/>
    </location>
</feature>
<feature type="sequence conflict" description="In Ref. 1; AAK52316." evidence="16" ref="1">
    <original>S</original>
    <variation>L</variation>
    <location>
        <position position="192"/>
    </location>
</feature>
<feature type="sequence conflict" description="In Ref. 1; AAK52316." evidence="16" ref="1">
    <location>
        <position position="346"/>
    </location>
</feature>
<gene>
    <name evidence="15" type="primary">SCPL19</name>
    <name evidence="14" type="synonym">SCT</name>
    <name evidence="13" type="synonym">SNG2</name>
    <name evidence="19" type="ordered locus">At5g09640</name>
    <name evidence="21" type="ORF">F17I14.170</name>
    <name evidence="20" type="ORF">MTH16.5</name>
</gene>
<accession>Q8VZU3</accession>
<accession>Q941P1</accession>
<accession>Q9FXX7</accession>
<accession>Q9LXC8</accession>
<comment type="function">
    <text evidence="6 7 9 10 11 12">Involved in plants secondary metabolism. Functions as acyltransferase to form the sinapate ester sinapoylcholine also known as sinapine. Able to convert in vitro benzoylglucose into benzoylcholine.</text>
</comment>
<comment type="catalytic activity">
    <reaction evidence="7">
        <text>1-O-(trans-sinapoyl)-beta-D-glucose + choline = O-sinapoylcholine + D-glucose</text>
        <dbReference type="Rhea" id="RHEA:12024"/>
        <dbReference type="ChEBI" id="CHEBI:4167"/>
        <dbReference type="ChEBI" id="CHEBI:15354"/>
        <dbReference type="ChEBI" id="CHEBI:16353"/>
        <dbReference type="ChEBI" id="CHEBI:16546"/>
        <dbReference type="EC" id="2.3.1.91"/>
    </reaction>
    <physiologicalReaction direction="left-to-right" evidence="7">
        <dbReference type="Rhea" id="RHEA:12025"/>
    </physiologicalReaction>
</comment>
<comment type="activity regulation">
    <text evidence="6">Slightly inhibited by phenylmethylsulfonyl fluoride (PMSF).</text>
</comment>
<comment type="biophysicochemical properties">
    <kinetics>
        <KM evidence="7">0.16 mM for sinapoylglucose</KM>
        <KM evidence="7">0.41 mM for feruloylglucose</KM>
        <KM evidence="7">0.1 mM for caffeoylglucose</KM>
        <KM evidence="7">1.9 mM for p-coumaroylglucose</KM>
        <KM evidence="7">3.2 mM for choline</KM>
        <KM evidence="7">19 mM for N,N-dimethylethanolamine</KM>
        <KM evidence="7">245 mM for 2-methylaminoethanol</KM>
        <KM evidence="7">25 mM for neopentyl alcohol</KM>
        <KM evidence="7">105 mM for Tris</KM>
        <Vmax evidence="7">2.8 nmol/sec/mg enzyme with sinapoylglucose as substrate</Vmax>
        <Vmax evidence="7">1.8 nmol/sec/mg enzyme with feruloylglucose as substrate</Vmax>
        <Vmax evidence="7">0.75 nmol/sec/mg enzyme with caffeoylglucose as substrate</Vmax>
        <Vmax evidence="7">3.3 nmol/sec/mg enzyme with p-coumaroylglucose as substrate</Vmax>
        <Vmax evidence="7">2.5 nmol/sec/mg enzyme with choline as substrate</Vmax>
        <Vmax evidence="7">1.7 nmol/sec/mg enzyme with N,N-dimethylethanolamine as substrate</Vmax>
        <Vmax evidence="7">1.2 nmol/sec/mg enzyme with 2-methylaminoethanol as substrate</Vmax>
        <Vmax evidence="7">0.45 nmol/sec/mg enzyme with neopentyl alcohol as substrate</Vmax>
        <Vmax evidence="7">0.32 nmol/sec/mg enzyme with Tris as substrate</Vmax>
        <text>Measured in vitro at pH 7.0 and 30 degrees Celsius.</text>
    </kinetics>
</comment>
<comment type="subunit">
    <text evidence="16">Heterodimer.</text>
</comment>
<comment type="subcellular location">
    <subcellularLocation>
        <location evidence="16">Secreted</location>
    </subcellularLocation>
</comment>
<comment type="tissue specificity">
    <text evidence="6 8 11">Expressed in roots and flowers, and at lower levels in young leaves and seedlings. Expressed in mature seeds and detected in expanding siliques.</text>
</comment>
<comment type="PTM">
    <text evidence="7">N-glycosylated.</text>
</comment>
<comment type="disruption phenotype">
    <text evidence="6 11 12">Plants accumulate sinapoylglucose and contain low levels of sinapoylcholine and increased levels of choline. Decreased levels of both benzoylated and sinapoylated glucosinolates.</text>
</comment>
<comment type="similarity">
    <text evidence="16">Belongs to the peptidase S10 family.</text>
</comment>
<comment type="caution">
    <text evidence="17 18">Was classified as a serine carboxypeptidase-like (SCPL) protein solely on the basis of the overall sequence similarity (PubMed:15908604) but it has been shown that it belongs to a class of enzymes that catalyze acyltransferase reactions (PubMed:17600138).</text>
</comment>
<comment type="sequence caution" evidence="16">
    <conflict type="erroneous gene model prediction">
        <sequence resource="EMBL-CDS" id="BAB09519"/>
    </conflict>
</comment>
<comment type="sequence caution" evidence="16">
    <conflict type="erroneous gene model prediction">
        <sequence resource="EMBL-CDS" id="CAB89366"/>
    </conflict>
</comment>
<dbReference type="EC" id="2.3.1.91" evidence="7"/>
<dbReference type="EMBL" id="AY033947">
    <property type="protein sequence ID" value="AAK52316.1"/>
    <property type="molecule type" value="mRNA"/>
</dbReference>
<dbReference type="EMBL" id="AB020752">
    <property type="protein sequence ID" value="BAB09519.1"/>
    <property type="status" value="ALT_SEQ"/>
    <property type="molecule type" value="Genomic_DNA"/>
</dbReference>
<dbReference type="EMBL" id="AL353994">
    <property type="protein sequence ID" value="CAB89366.1"/>
    <property type="status" value="ALT_SEQ"/>
    <property type="molecule type" value="Genomic_DNA"/>
</dbReference>
<dbReference type="EMBL" id="CP002688">
    <property type="protein sequence ID" value="AED91420.1"/>
    <property type="molecule type" value="Genomic_DNA"/>
</dbReference>
<dbReference type="EMBL" id="AY063833">
    <property type="protein sequence ID" value="AAL36189.1"/>
    <property type="molecule type" value="mRNA"/>
</dbReference>
<dbReference type="EMBL" id="AY091309">
    <property type="protein sequence ID" value="AAM14248.1"/>
    <property type="molecule type" value="mRNA"/>
</dbReference>
<dbReference type="PIR" id="T49934">
    <property type="entry name" value="T49934"/>
</dbReference>
<dbReference type="RefSeq" id="NP_568215.2">
    <property type="nucleotide sequence ID" value="NM_121001.2"/>
</dbReference>
<dbReference type="SMR" id="Q8VZU3"/>
<dbReference type="FunCoup" id="Q8VZU3">
    <property type="interactions" value="888"/>
</dbReference>
<dbReference type="STRING" id="3702.Q8VZU3"/>
<dbReference type="ESTHER" id="arath-SCP19">
    <property type="family name" value="Carboxypeptidase_S10"/>
</dbReference>
<dbReference type="MEROPS" id="S10.A18"/>
<dbReference type="GlyCosmos" id="Q8VZU3">
    <property type="glycosylation" value="4 sites, No reported glycans"/>
</dbReference>
<dbReference type="GlyGen" id="Q8VZU3">
    <property type="glycosylation" value="4 sites"/>
</dbReference>
<dbReference type="PaxDb" id="3702-AT5G09640.1"/>
<dbReference type="ProteomicsDB" id="232741"/>
<dbReference type="EnsemblPlants" id="AT5G09640.1">
    <property type="protein sequence ID" value="AT5G09640.1"/>
    <property type="gene ID" value="AT5G09640"/>
</dbReference>
<dbReference type="GeneID" id="830823"/>
<dbReference type="Gramene" id="AT5G09640.1">
    <property type="protein sequence ID" value="AT5G09640.1"/>
    <property type="gene ID" value="AT5G09640"/>
</dbReference>
<dbReference type="KEGG" id="ath:AT5G09640"/>
<dbReference type="Araport" id="AT5G09640"/>
<dbReference type="TAIR" id="AT5G09640">
    <property type="gene designation" value="SCPL19"/>
</dbReference>
<dbReference type="eggNOG" id="KOG1282">
    <property type="taxonomic scope" value="Eukaryota"/>
</dbReference>
<dbReference type="HOGENOM" id="CLU_008523_0_1_1"/>
<dbReference type="InParanoid" id="Q8VZU3"/>
<dbReference type="OMA" id="IWANENS"/>
<dbReference type="PhylomeDB" id="Q8VZU3"/>
<dbReference type="BioCyc" id="ARA:AT5G09640-MONOMER"/>
<dbReference type="BRENDA" id="2.3.1.91">
    <property type="organism ID" value="399"/>
</dbReference>
<dbReference type="PRO" id="PR:Q8VZU3"/>
<dbReference type="Proteomes" id="UP000006548">
    <property type="component" value="Chromosome 5"/>
</dbReference>
<dbReference type="ExpressionAtlas" id="Q8VZU3">
    <property type="expression patterns" value="baseline and differential"/>
</dbReference>
<dbReference type="GO" id="GO:0005576">
    <property type="term" value="C:extracellular region"/>
    <property type="evidence" value="ECO:0007669"/>
    <property type="project" value="UniProtKB-SubCell"/>
</dbReference>
<dbReference type="GO" id="GO:0004185">
    <property type="term" value="F:serine-type carboxypeptidase activity"/>
    <property type="evidence" value="ECO:0007669"/>
    <property type="project" value="InterPro"/>
</dbReference>
<dbReference type="GO" id="GO:0047202">
    <property type="term" value="F:sinapoylglucose-choline O-sinapoyltransferase activity"/>
    <property type="evidence" value="ECO:0007669"/>
    <property type="project" value="UniProtKB-EC"/>
</dbReference>
<dbReference type="GO" id="GO:0016752">
    <property type="term" value="F:sinapoyltransferase activity"/>
    <property type="evidence" value="ECO:0000315"/>
    <property type="project" value="TAIR"/>
</dbReference>
<dbReference type="GO" id="GO:0006508">
    <property type="term" value="P:proteolysis"/>
    <property type="evidence" value="ECO:0007669"/>
    <property type="project" value="InterPro"/>
</dbReference>
<dbReference type="GO" id="GO:0019748">
    <property type="term" value="P:secondary metabolic process"/>
    <property type="evidence" value="ECO:0000315"/>
    <property type="project" value="TAIR"/>
</dbReference>
<dbReference type="FunFam" id="3.40.50.12670:FF:000001">
    <property type="entry name" value="Carboxypeptidase"/>
    <property type="match status" value="1"/>
</dbReference>
<dbReference type="FunFam" id="3.40.50.1820:FF:000148">
    <property type="entry name" value="Serine carboxypeptidase-like 11"/>
    <property type="match status" value="1"/>
</dbReference>
<dbReference type="Gene3D" id="3.40.50.12670">
    <property type="match status" value="1"/>
</dbReference>
<dbReference type="Gene3D" id="3.40.50.1820">
    <property type="entry name" value="alpha/beta hydrolase"/>
    <property type="match status" value="1"/>
</dbReference>
<dbReference type="InterPro" id="IPR029058">
    <property type="entry name" value="AB_hydrolase_fold"/>
</dbReference>
<dbReference type="InterPro" id="IPR001563">
    <property type="entry name" value="Peptidase_S10"/>
</dbReference>
<dbReference type="PANTHER" id="PTHR11802:SF29">
    <property type="entry name" value="SERINE CARBOXYPEPTIDASE-LIKE 19"/>
    <property type="match status" value="1"/>
</dbReference>
<dbReference type="PANTHER" id="PTHR11802">
    <property type="entry name" value="SERINE PROTEASE FAMILY S10 SERINE CARBOXYPEPTIDASE"/>
    <property type="match status" value="1"/>
</dbReference>
<dbReference type="Pfam" id="PF00450">
    <property type="entry name" value="Peptidase_S10"/>
    <property type="match status" value="1"/>
</dbReference>
<dbReference type="PRINTS" id="PR00724">
    <property type="entry name" value="CRBOXYPTASEC"/>
</dbReference>
<dbReference type="SUPFAM" id="SSF53474">
    <property type="entry name" value="alpha/beta-Hydrolases"/>
    <property type="match status" value="1"/>
</dbReference>
<sequence>MRNLSFIVLFLLTLFFIHHLVDASLLVKSLPGFEGPLPFELETGYVSIGESGDVELFYYFVKSERNPENDPLMIWLTGGPGCSSICGLLFANGPLAFKGDEYNGTVPPLELTSFSWTKVANILYLEAPAGSGYSYAKTRRAFESSDTKQMHQIDQFLRSWFVKHPEFISNPFYVGGDSYSGKIVPGAVQQISLGNEKGLTPLINIQGYVLGNPVTDKNIETNYRVPFAHGMGLISDELFESLERSCGGKFFNVDPSNARCSNNLQAYDHCMSEIYSEHILLRNCKVDYVLADTPNIRTDRRRVMKEFSVNDSSSLPPPSCFTYRYFLSAFWANDENVRRALGVKKEVGKWNRCNSQNIPYTFEIFNAVPYHVNNSLKGFRSLIYSGDHDSMVPFSSTQAWIRALNYSIVDDWRPWMMSSNQVAGYTRTYANKMTFATIKGGGHTAEYTPDQCSLMFRRWIDGEPL</sequence>
<keyword id="KW-0012">Acyltransferase</keyword>
<keyword id="KW-1015">Disulfide bond</keyword>
<keyword id="KW-0325">Glycoprotein</keyword>
<keyword id="KW-1185">Reference proteome</keyword>
<keyword id="KW-0964">Secreted</keyword>
<keyword id="KW-0732">Signal</keyword>
<keyword id="KW-0808">Transferase</keyword>
<organism>
    <name type="scientific">Arabidopsis thaliana</name>
    <name type="common">Mouse-ear cress</name>
    <dbReference type="NCBI Taxonomy" id="3702"/>
    <lineage>
        <taxon>Eukaryota</taxon>
        <taxon>Viridiplantae</taxon>
        <taxon>Streptophyta</taxon>
        <taxon>Embryophyta</taxon>
        <taxon>Tracheophyta</taxon>
        <taxon>Spermatophyta</taxon>
        <taxon>Magnoliopsida</taxon>
        <taxon>eudicotyledons</taxon>
        <taxon>Gunneridae</taxon>
        <taxon>Pentapetalae</taxon>
        <taxon>rosids</taxon>
        <taxon>malvids</taxon>
        <taxon>Brassicales</taxon>
        <taxon>Brassicaceae</taxon>
        <taxon>Camelineae</taxon>
        <taxon>Arabidopsis</taxon>
    </lineage>
</organism>
<reference key="1">
    <citation type="journal article" date="2001" name="Plant J.">
        <title>The sng2 mutant of Arabidopsis is defective in the gene encoding the serine carboxypeptidase-like protein sinapoylglucose:choline sinapoyltransferase.</title>
        <authorList>
            <person name="Shirley A.M."/>
            <person name="McMichael C.M."/>
            <person name="Chapple C."/>
        </authorList>
    </citation>
    <scope>NUCLEOTIDE SEQUENCE [MRNA]</scope>
    <scope>FUNCTION</scope>
    <scope>DISRUPTION PHENOTYPE</scope>
    <scope>ACTIVITY REGULATION</scope>
    <scope>TISSUE SPECIFICITY</scope>
    <source>
        <strain>cv. Landsberg erecta</strain>
    </source>
</reference>
<reference key="2">
    <citation type="journal article" date="1999" name="DNA Res.">
        <title>Structural analysis of Arabidopsis thaliana chromosome 5. IX. Sequence features of the regions of 1,011,550 bp covered by seventeen P1 and TAC clones.</title>
        <authorList>
            <person name="Kaneko T."/>
            <person name="Katoh T."/>
            <person name="Sato S."/>
            <person name="Nakamura Y."/>
            <person name="Asamizu E."/>
            <person name="Kotani H."/>
            <person name="Miyajima N."/>
            <person name="Tabata S."/>
        </authorList>
    </citation>
    <scope>NUCLEOTIDE SEQUENCE [LARGE SCALE GENOMIC DNA]</scope>
    <source>
        <strain>cv. Columbia</strain>
    </source>
</reference>
<reference key="3">
    <citation type="journal article" date="2000" name="Nature">
        <title>Sequence and analysis of chromosome 5 of the plant Arabidopsis thaliana.</title>
        <authorList>
            <person name="Tabata S."/>
            <person name="Kaneko T."/>
            <person name="Nakamura Y."/>
            <person name="Kotani H."/>
            <person name="Kato T."/>
            <person name="Asamizu E."/>
            <person name="Miyajima N."/>
            <person name="Sasamoto S."/>
            <person name="Kimura T."/>
            <person name="Hosouchi T."/>
            <person name="Kawashima K."/>
            <person name="Kohara M."/>
            <person name="Matsumoto M."/>
            <person name="Matsuno A."/>
            <person name="Muraki A."/>
            <person name="Nakayama S."/>
            <person name="Nakazaki N."/>
            <person name="Naruo K."/>
            <person name="Okumura S."/>
            <person name="Shinpo S."/>
            <person name="Takeuchi C."/>
            <person name="Wada T."/>
            <person name="Watanabe A."/>
            <person name="Yamada M."/>
            <person name="Yasuda M."/>
            <person name="Sato S."/>
            <person name="de la Bastide M."/>
            <person name="Huang E."/>
            <person name="Spiegel L."/>
            <person name="Gnoj L."/>
            <person name="O'Shaughnessy A."/>
            <person name="Preston R."/>
            <person name="Habermann K."/>
            <person name="Murray J."/>
            <person name="Johnson D."/>
            <person name="Rohlfing T."/>
            <person name="Nelson J."/>
            <person name="Stoneking T."/>
            <person name="Pepin K."/>
            <person name="Spieth J."/>
            <person name="Sekhon M."/>
            <person name="Armstrong J."/>
            <person name="Becker M."/>
            <person name="Belter E."/>
            <person name="Cordum H."/>
            <person name="Cordes M."/>
            <person name="Courtney L."/>
            <person name="Courtney W."/>
            <person name="Dante M."/>
            <person name="Du H."/>
            <person name="Edwards J."/>
            <person name="Fryman J."/>
            <person name="Haakensen B."/>
            <person name="Lamar E."/>
            <person name="Latreille P."/>
            <person name="Leonard S."/>
            <person name="Meyer R."/>
            <person name="Mulvaney E."/>
            <person name="Ozersky P."/>
            <person name="Riley A."/>
            <person name="Strowmatt C."/>
            <person name="Wagner-McPherson C."/>
            <person name="Wollam A."/>
            <person name="Yoakum M."/>
            <person name="Bell M."/>
            <person name="Dedhia N."/>
            <person name="Parnell L."/>
            <person name="Shah R."/>
            <person name="Rodriguez M."/>
            <person name="Hoon See L."/>
            <person name="Vil D."/>
            <person name="Baker J."/>
            <person name="Kirchoff K."/>
            <person name="Toth K."/>
            <person name="King L."/>
            <person name="Bahret A."/>
            <person name="Miller B."/>
            <person name="Marra M.A."/>
            <person name="Martienssen R."/>
            <person name="McCombie W.R."/>
            <person name="Wilson R.K."/>
            <person name="Murphy G."/>
            <person name="Bancroft I."/>
            <person name="Volckaert G."/>
            <person name="Wambutt R."/>
            <person name="Duesterhoeft A."/>
            <person name="Stiekema W."/>
            <person name="Pohl T."/>
            <person name="Entian K.-D."/>
            <person name="Terryn N."/>
            <person name="Hartley N."/>
            <person name="Bent E."/>
            <person name="Johnson S."/>
            <person name="Langham S.-A."/>
            <person name="McCullagh B."/>
            <person name="Robben J."/>
            <person name="Grymonprez B."/>
            <person name="Zimmermann W."/>
            <person name="Ramsperger U."/>
            <person name="Wedler H."/>
            <person name="Balke K."/>
            <person name="Wedler E."/>
            <person name="Peters S."/>
            <person name="van Staveren M."/>
            <person name="Dirkse W."/>
            <person name="Mooijman P."/>
            <person name="Klein Lankhorst R."/>
            <person name="Weitzenegger T."/>
            <person name="Bothe G."/>
            <person name="Rose M."/>
            <person name="Hauf J."/>
            <person name="Berneiser S."/>
            <person name="Hempel S."/>
            <person name="Feldpausch M."/>
            <person name="Lamberth S."/>
            <person name="Villarroel R."/>
            <person name="Gielen J."/>
            <person name="Ardiles W."/>
            <person name="Bents O."/>
            <person name="Lemcke K."/>
            <person name="Kolesov G."/>
            <person name="Mayer K.F.X."/>
            <person name="Rudd S."/>
            <person name="Schoof H."/>
            <person name="Schueller C."/>
            <person name="Zaccaria P."/>
            <person name="Mewes H.-W."/>
            <person name="Bevan M."/>
            <person name="Fransz P.F."/>
        </authorList>
    </citation>
    <scope>NUCLEOTIDE SEQUENCE [LARGE SCALE GENOMIC DNA]</scope>
    <source>
        <strain>cv. Columbia</strain>
    </source>
</reference>
<reference key="4">
    <citation type="journal article" date="2017" name="Plant J.">
        <title>Araport11: a complete reannotation of the Arabidopsis thaliana reference genome.</title>
        <authorList>
            <person name="Cheng C.Y."/>
            <person name="Krishnakumar V."/>
            <person name="Chan A.P."/>
            <person name="Thibaud-Nissen F."/>
            <person name="Schobel S."/>
            <person name="Town C.D."/>
        </authorList>
    </citation>
    <scope>GENOME REANNOTATION</scope>
    <source>
        <strain>cv. Columbia</strain>
    </source>
</reference>
<reference key="5">
    <citation type="journal article" date="2003" name="Science">
        <title>Empirical analysis of transcriptional activity in the Arabidopsis genome.</title>
        <authorList>
            <person name="Yamada K."/>
            <person name="Lim J."/>
            <person name="Dale J.M."/>
            <person name="Chen H."/>
            <person name="Shinn P."/>
            <person name="Palm C.J."/>
            <person name="Southwick A.M."/>
            <person name="Wu H.C."/>
            <person name="Kim C.J."/>
            <person name="Nguyen M."/>
            <person name="Pham P.K."/>
            <person name="Cheuk R.F."/>
            <person name="Karlin-Newmann G."/>
            <person name="Liu S.X."/>
            <person name="Lam B."/>
            <person name="Sakano H."/>
            <person name="Wu T."/>
            <person name="Yu G."/>
            <person name="Miranda M."/>
            <person name="Quach H.L."/>
            <person name="Tripp M."/>
            <person name="Chang C.H."/>
            <person name="Lee J.M."/>
            <person name="Toriumi M.J."/>
            <person name="Chan M.M."/>
            <person name="Tang C.C."/>
            <person name="Onodera C.S."/>
            <person name="Deng J.M."/>
            <person name="Akiyama K."/>
            <person name="Ansari Y."/>
            <person name="Arakawa T."/>
            <person name="Banh J."/>
            <person name="Banno F."/>
            <person name="Bowser L."/>
            <person name="Brooks S.Y."/>
            <person name="Carninci P."/>
            <person name="Chao Q."/>
            <person name="Choy N."/>
            <person name="Enju A."/>
            <person name="Goldsmith A.D."/>
            <person name="Gurjal M."/>
            <person name="Hansen N.F."/>
            <person name="Hayashizaki Y."/>
            <person name="Johnson-Hopson C."/>
            <person name="Hsuan V.W."/>
            <person name="Iida K."/>
            <person name="Karnes M."/>
            <person name="Khan S."/>
            <person name="Koesema E."/>
            <person name="Ishida J."/>
            <person name="Jiang P.X."/>
            <person name="Jones T."/>
            <person name="Kawai J."/>
            <person name="Kamiya A."/>
            <person name="Meyers C."/>
            <person name="Nakajima M."/>
            <person name="Narusaka M."/>
            <person name="Seki M."/>
            <person name="Sakurai T."/>
            <person name="Satou M."/>
            <person name="Tamse R."/>
            <person name="Vaysberg M."/>
            <person name="Wallender E.K."/>
            <person name="Wong C."/>
            <person name="Yamamura Y."/>
            <person name="Yuan S."/>
            <person name="Shinozaki K."/>
            <person name="Davis R.W."/>
            <person name="Theologis A."/>
            <person name="Ecker J.R."/>
        </authorList>
    </citation>
    <scope>NUCLEOTIDE SEQUENCE [LARGE SCALE MRNA]</scope>
    <source>
        <strain>cv. Columbia</strain>
    </source>
</reference>
<reference key="6">
    <citation type="journal article" date="2003" name="J. Biol. Chem.">
        <title>Biochemical characterization of sinapoylglucose:choline sinapoyltransferase, a serine carboxypeptidase-like protein that functions as an acyltransferase in plant secondary metabolism.</title>
        <authorList>
            <person name="Shirley A.M."/>
            <person name="Chapple C."/>
        </authorList>
    </citation>
    <scope>FUNCTION</scope>
    <scope>BIOPHYSICOCHEMICAL PROPERTIES</scope>
    <scope>CATALYTIC ACTIVITY</scope>
    <scope>GLYCOSYLATION</scope>
</reference>
<reference key="7">
    <citation type="journal article" date="2005" name="Plant Physiol.">
        <title>An expression and bioinformatics analysis of the Arabidopsis serine carboxypeptidase-like gene family.</title>
        <authorList>
            <person name="Fraser C.M."/>
            <person name="Rider L.W."/>
            <person name="Chapple C."/>
        </authorList>
    </citation>
    <scope>GENE FAMILY</scope>
    <scope>TISSUE SPECIFICITY</scope>
    <scope>NOMENCLATURE</scope>
</reference>
<reference key="8">
    <citation type="journal article" date="2006" name="FEBS Lett.">
        <title>Structure determinants and substrate recognition of serine carboxypeptidase-like acyltransferases from plant secondary metabolism.</title>
        <authorList>
            <person name="Stehle F."/>
            <person name="Brandt W."/>
            <person name="Milkowski C."/>
            <person name="Strack D."/>
        </authorList>
    </citation>
    <scope>FUNCTION</scope>
    <scope>3D-STRUCTURE MODELING</scope>
</reference>
<reference key="9">
    <citation type="journal article" date="2007" name="Plant Physiol.">
        <title>Related Arabidopsis serine carboxypeptidase-like sinapoylglucose acyltransferases display distinct but overlapping substrate specificities.</title>
        <authorList>
            <person name="Fraser C.M."/>
            <person name="Thompson M.G."/>
            <person name="Shirley A.M."/>
            <person name="Ralph J."/>
            <person name="Schoenherr J.A."/>
            <person name="Sinlapadech T."/>
            <person name="Hall M.C."/>
            <person name="Chapple C."/>
        </authorList>
    </citation>
    <scope>FUNCTION</scope>
</reference>
<reference key="10">
    <citation type="journal article" date="2008" name="Plant Physiol. Biochem.">
        <title>Manipulation of sinapine, choline and betaine accumulation in Arabidopsis seed: towards improving the nutritional value of the meal and enhancing the seedling performance under environmental stresses in oilseed crops.</title>
        <authorList>
            <person name="Huang J."/>
            <person name="Rozwadowski K."/>
            <person name="Bhinu V.S."/>
            <person name="Schafer U."/>
            <person name="Hannoufa A."/>
        </authorList>
    </citation>
    <scope>FUNCTION</scope>
    <scope>TISSUE SPECIFICITY</scope>
    <scope>DISRUPTION PHENOTYPE</scope>
</reference>
<reference key="11">
    <citation type="journal article" date="2012" name="Plant J.">
        <title>Benzoylation and sinapoylation of glucosinolate R-groups in Arabidopsis.</title>
        <authorList>
            <person name="Lee S."/>
            <person name="Kaminaga Y."/>
            <person name="Cooper B."/>
            <person name="Pichersky E."/>
            <person name="Dudareva N."/>
            <person name="Chapple C."/>
        </authorList>
    </citation>
    <scope>FUNCTION</scope>
    <scope>DISRUPTION PHENOTYPE</scope>
</reference>
<evidence type="ECO:0000250" key="1"/>
<evidence type="ECO:0000250" key="2">
    <source>
        <dbReference type="UniProtKB" id="P08819"/>
    </source>
</evidence>
<evidence type="ECO:0000250" key="3">
    <source>
        <dbReference type="UniProtKB" id="P52708"/>
    </source>
</evidence>
<evidence type="ECO:0000255" key="4"/>
<evidence type="ECO:0000255" key="5">
    <source>
        <dbReference type="PROSITE-ProRule" id="PRU00498"/>
    </source>
</evidence>
<evidence type="ECO:0000269" key="6">
    <source>
    </source>
</evidence>
<evidence type="ECO:0000269" key="7">
    <source>
    </source>
</evidence>
<evidence type="ECO:0000269" key="8">
    <source>
    </source>
</evidence>
<evidence type="ECO:0000269" key="9">
    <source>
    </source>
</evidence>
<evidence type="ECO:0000269" key="10">
    <source>
    </source>
</evidence>
<evidence type="ECO:0000269" key="11">
    <source>
    </source>
</evidence>
<evidence type="ECO:0000269" key="12">
    <source>
    </source>
</evidence>
<evidence type="ECO:0000303" key="13">
    <source>
    </source>
</evidence>
<evidence type="ECO:0000303" key="14">
    <source>
    </source>
</evidence>
<evidence type="ECO:0000303" key="15">
    <source>
    </source>
</evidence>
<evidence type="ECO:0000305" key="16"/>
<evidence type="ECO:0000305" key="17">
    <source>
    </source>
</evidence>
<evidence type="ECO:0000305" key="18">
    <source>
    </source>
</evidence>
<evidence type="ECO:0000312" key="19">
    <source>
        <dbReference type="Araport" id="AT5G09640"/>
    </source>
</evidence>
<evidence type="ECO:0000312" key="20">
    <source>
        <dbReference type="EMBL" id="BAB09519.1"/>
    </source>
</evidence>
<evidence type="ECO:0000312" key="21">
    <source>
        <dbReference type="EMBL" id="CAB89366.1"/>
    </source>
</evidence>
<name>SCP19_ARATH</name>